<organism>
    <name type="scientific">Saccharolobus islandicus (strain Y.N.15.51 / Yellowstone #2)</name>
    <name type="common">Sulfolobus islandicus</name>
    <dbReference type="NCBI Taxonomy" id="419942"/>
    <lineage>
        <taxon>Archaea</taxon>
        <taxon>Thermoproteota</taxon>
        <taxon>Thermoprotei</taxon>
        <taxon>Sulfolobales</taxon>
        <taxon>Sulfolobaceae</taxon>
        <taxon>Saccharolobus</taxon>
    </lineage>
</organism>
<evidence type="ECO:0000255" key="1">
    <source>
        <dbReference type="HAMAP-Rule" id="MF_00232"/>
    </source>
</evidence>
<reference key="1">
    <citation type="journal article" date="2009" name="Proc. Natl. Acad. Sci. U.S.A.">
        <title>Biogeography of the Sulfolobus islandicus pan-genome.</title>
        <authorList>
            <person name="Reno M.L."/>
            <person name="Held N.L."/>
            <person name="Fields C.J."/>
            <person name="Burke P.V."/>
            <person name="Whitaker R.J."/>
        </authorList>
    </citation>
    <scope>NUCLEOTIDE SEQUENCE [LARGE SCALE GENOMIC DNA]</scope>
    <source>
        <strain>Y.N.15.51 / Yellowstone #2</strain>
    </source>
</reference>
<dbReference type="EMBL" id="CP001404">
    <property type="protein sequence ID" value="ACP49685.1"/>
    <property type="molecule type" value="Genomic_DNA"/>
</dbReference>
<dbReference type="SMR" id="C3NMA3"/>
<dbReference type="KEGG" id="sin:YN1551_2781"/>
<dbReference type="HOGENOM" id="CLU_026663_3_1_2"/>
<dbReference type="Proteomes" id="UP000006818">
    <property type="component" value="Chromosome"/>
</dbReference>
<dbReference type="GO" id="GO:0003743">
    <property type="term" value="F:translation initiation factor activity"/>
    <property type="evidence" value="ECO:0007669"/>
    <property type="project" value="UniProtKB-UniRule"/>
</dbReference>
<dbReference type="FunFam" id="3.30.30.170:FF:000001">
    <property type="entry name" value="Eukaryotic translation initiation factor 2 subunit"/>
    <property type="match status" value="1"/>
</dbReference>
<dbReference type="Gene3D" id="3.30.30.170">
    <property type="match status" value="1"/>
</dbReference>
<dbReference type="HAMAP" id="MF_00232">
    <property type="entry name" value="eIF_2_beta"/>
    <property type="match status" value="1"/>
</dbReference>
<dbReference type="InterPro" id="IPR045196">
    <property type="entry name" value="IF2/IF5"/>
</dbReference>
<dbReference type="InterPro" id="IPR004458">
    <property type="entry name" value="TIF2_bsu_arc"/>
</dbReference>
<dbReference type="InterPro" id="IPR002735">
    <property type="entry name" value="Transl_init_fac_IF2/IF5_dom"/>
</dbReference>
<dbReference type="InterPro" id="IPR016189">
    <property type="entry name" value="Transl_init_fac_IF2/IF5_N"/>
</dbReference>
<dbReference type="InterPro" id="IPR016190">
    <property type="entry name" value="Transl_init_fac_IF2/IF5_Zn-bd"/>
</dbReference>
<dbReference type="NCBIfam" id="NF003067">
    <property type="entry name" value="PRK03988.1"/>
    <property type="match status" value="1"/>
</dbReference>
<dbReference type="PANTHER" id="PTHR23001">
    <property type="entry name" value="EUKARYOTIC TRANSLATION INITIATION FACTOR"/>
    <property type="match status" value="1"/>
</dbReference>
<dbReference type="PANTHER" id="PTHR23001:SF3">
    <property type="entry name" value="EUKARYOTIC TRANSLATION INITIATION FACTOR 2 SUBUNIT 2"/>
    <property type="match status" value="1"/>
</dbReference>
<dbReference type="Pfam" id="PF01873">
    <property type="entry name" value="eIF-5_eIF-2B"/>
    <property type="match status" value="1"/>
</dbReference>
<dbReference type="SMART" id="SM00653">
    <property type="entry name" value="eIF2B_5"/>
    <property type="match status" value="1"/>
</dbReference>
<dbReference type="SUPFAM" id="SSF100966">
    <property type="entry name" value="Translation initiation factor 2 beta, aIF2beta, N-terminal domain"/>
    <property type="match status" value="1"/>
</dbReference>
<dbReference type="SUPFAM" id="SSF75689">
    <property type="entry name" value="Zinc-binding domain of translation initiation factor 2 beta"/>
    <property type="match status" value="1"/>
</dbReference>
<gene>
    <name evidence="1" type="primary">eif2b</name>
    <name type="ordered locus">YN1551_2781</name>
</gene>
<keyword id="KW-0396">Initiation factor</keyword>
<keyword id="KW-0648">Protein biosynthesis</keyword>
<protein>
    <recommendedName>
        <fullName evidence="1">Translation initiation factor 2 subunit beta</fullName>
    </recommendedName>
    <alternativeName>
        <fullName evidence="1">aIF2-beta</fullName>
    </alternativeName>
    <alternativeName>
        <fullName evidence="1">eIF-2-beta</fullName>
    </alternativeName>
</protein>
<name>IF2B_SACI1</name>
<feature type="chain" id="PRO_1000204381" description="Translation initiation factor 2 subunit beta">
    <location>
        <begin position="1"/>
        <end position="139"/>
    </location>
</feature>
<comment type="function">
    <text evidence="1">eIF-2 functions in the early steps of protein synthesis by forming a ternary complex with GTP and initiator tRNA.</text>
</comment>
<comment type="subunit">
    <text evidence="1">Heterotrimer composed of an alpha, a beta and a gamma chain.</text>
</comment>
<comment type="similarity">
    <text evidence="1">Belongs to the eIF-2-beta/eIF-5 family.</text>
</comment>
<proteinExistence type="inferred from homology"/>
<sequence length="139" mass="15938">MSSEKEYVEMLDRLYSKLPEKGRKEGTQALPNLIIFNIGNTTMIRNFAEYCDRIRREDKICMKYLLKELAAPGNVDDKGELIIQGKFSSQVINTLMERFLKAYVECSTCKSLDTVLKKEKKSWYIVCLACGAQTPVKPL</sequence>
<accession>C3NMA3</accession>